<accession>A5U726</accession>
<comment type="function">
    <text evidence="1">DNA ligase that catalyzes the formation of phosphodiester linkages between 5'-phosphoryl and 3'-hydroxyl groups in double-stranded DNA using NAD as a coenzyme and as the energy source for the reaction. It is essential for DNA replication and repair of damaged DNA.</text>
</comment>
<comment type="catalytic activity">
    <reaction evidence="1">
        <text>NAD(+) + (deoxyribonucleotide)n-3'-hydroxyl + 5'-phospho-(deoxyribonucleotide)m = (deoxyribonucleotide)n+m + AMP + beta-nicotinamide D-nucleotide.</text>
        <dbReference type="EC" id="6.5.1.2"/>
    </reaction>
</comment>
<comment type="cofactor">
    <cofactor evidence="1">
        <name>Mg(2+)</name>
        <dbReference type="ChEBI" id="CHEBI:18420"/>
    </cofactor>
    <cofactor evidence="1">
        <name>Mn(2+)</name>
        <dbReference type="ChEBI" id="CHEBI:29035"/>
    </cofactor>
</comment>
<comment type="similarity">
    <text evidence="1">Belongs to the NAD-dependent DNA ligase family. LigA subfamily.</text>
</comment>
<name>DNLJ_MYCTA</name>
<dbReference type="EC" id="6.5.1.2" evidence="1"/>
<dbReference type="EMBL" id="CP000611">
    <property type="protein sequence ID" value="ABQ74826.1"/>
    <property type="molecule type" value="Genomic_DNA"/>
</dbReference>
<dbReference type="RefSeq" id="WP_003415263.1">
    <property type="nucleotide sequence ID" value="NZ_CP016972.1"/>
</dbReference>
<dbReference type="SMR" id="A5U726"/>
<dbReference type="KEGG" id="mra:MRA_3044"/>
<dbReference type="eggNOG" id="COG0272">
    <property type="taxonomic scope" value="Bacteria"/>
</dbReference>
<dbReference type="HOGENOM" id="CLU_007764_2_0_11"/>
<dbReference type="Proteomes" id="UP000001988">
    <property type="component" value="Chromosome"/>
</dbReference>
<dbReference type="GO" id="GO:0005829">
    <property type="term" value="C:cytosol"/>
    <property type="evidence" value="ECO:0007669"/>
    <property type="project" value="TreeGrafter"/>
</dbReference>
<dbReference type="GO" id="GO:0003911">
    <property type="term" value="F:DNA ligase (NAD+) activity"/>
    <property type="evidence" value="ECO:0007669"/>
    <property type="project" value="UniProtKB-UniRule"/>
</dbReference>
<dbReference type="GO" id="GO:0046872">
    <property type="term" value="F:metal ion binding"/>
    <property type="evidence" value="ECO:0007669"/>
    <property type="project" value="UniProtKB-KW"/>
</dbReference>
<dbReference type="GO" id="GO:0006281">
    <property type="term" value="P:DNA repair"/>
    <property type="evidence" value="ECO:0007669"/>
    <property type="project" value="UniProtKB-KW"/>
</dbReference>
<dbReference type="GO" id="GO:0006260">
    <property type="term" value="P:DNA replication"/>
    <property type="evidence" value="ECO:0007669"/>
    <property type="project" value="UniProtKB-KW"/>
</dbReference>
<dbReference type="CDD" id="cd17748">
    <property type="entry name" value="BRCT_DNA_ligase_like"/>
    <property type="match status" value="1"/>
</dbReference>
<dbReference type="CDD" id="cd00114">
    <property type="entry name" value="LIGANc"/>
    <property type="match status" value="1"/>
</dbReference>
<dbReference type="FunFam" id="1.10.150.20:FF:000006">
    <property type="entry name" value="DNA ligase"/>
    <property type="match status" value="1"/>
</dbReference>
<dbReference type="FunFam" id="1.10.150.20:FF:000100">
    <property type="entry name" value="DNA ligase"/>
    <property type="match status" value="1"/>
</dbReference>
<dbReference type="FunFam" id="1.10.287.610:FF:000002">
    <property type="entry name" value="DNA ligase"/>
    <property type="match status" value="1"/>
</dbReference>
<dbReference type="FunFam" id="2.40.50.140:FF:000012">
    <property type="entry name" value="DNA ligase"/>
    <property type="match status" value="1"/>
</dbReference>
<dbReference type="FunFam" id="3.30.470.30:FF:000001">
    <property type="entry name" value="DNA ligase"/>
    <property type="match status" value="1"/>
</dbReference>
<dbReference type="FunFam" id="3.40.50.10190:FF:000054">
    <property type="entry name" value="DNA ligase"/>
    <property type="match status" value="1"/>
</dbReference>
<dbReference type="Gene3D" id="6.20.10.30">
    <property type="match status" value="1"/>
</dbReference>
<dbReference type="Gene3D" id="1.10.150.20">
    <property type="entry name" value="5' to 3' exonuclease, C-terminal subdomain"/>
    <property type="match status" value="2"/>
</dbReference>
<dbReference type="Gene3D" id="3.40.50.10190">
    <property type="entry name" value="BRCT domain"/>
    <property type="match status" value="1"/>
</dbReference>
<dbReference type="Gene3D" id="3.30.470.30">
    <property type="entry name" value="DNA ligase/mRNA capping enzyme"/>
    <property type="match status" value="1"/>
</dbReference>
<dbReference type="Gene3D" id="1.10.287.610">
    <property type="entry name" value="Helix hairpin bin"/>
    <property type="match status" value="1"/>
</dbReference>
<dbReference type="Gene3D" id="2.40.50.140">
    <property type="entry name" value="Nucleic acid-binding proteins"/>
    <property type="match status" value="1"/>
</dbReference>
<dbReference type="HAMAP" id="MF_01588">
    <property type="entry name" value="DNA_ligase_A"/>
    <property type="match status" value="1"/>
</dbReference>
<dbReference type="InterPro" id="IPR001357">
    <property type="entry name" value="BRCT_dom"/>
</dbReference>
<dbReference type="InterPro" id="IPR036420">
    <property type="entry name" value="BRCT_dom_sf"/>
</dbReference>
<dbReference type="InterPro" id="IPR041663">
    <property type="entry name" value="DisA/LigA_HHH"/>
</dbReference>
<dbReference type="InterPro" id="IPR001679">
    <property type="entry name" value="DNA_ligase"/>
</dbReference>
<dbReference type="InterPro" id="IPR018239">
    <property type="entry name" value="DNA_ligase_AS"/>
</dbReference>
<dbReference type="InterPro" id="IPR033136">
    <property type="entry name" value="DNA_ligase_CS"/>
</dbReference>
<dbReference type="InterPro" id="IPR013839">
    <property type="entry name" value="DNAligase_adenylation"/>
</dbReference>
<dbReference type="InterPro" id="IPR013840">
    <property type="entry name" value="DNAligase_N"/>
</dbReference>
<dbReference type="InterPro" id="IPR012340">
    <property type="entry name" value="NA-bd_OB-fold"/>
</dbReference>
<dbReference type="InterPro" id="IPR004150">
    <property type="entry name" value="NAD_DNA_ligase_OB"/>
</dbReference>
<dbReference type="InterPro" id="IPR010994">
    <property type="entry name" value="RuvA_2-like"/>
</dbReference>
<dbReference type="InterPro" id="IPR004149">
    <property type="entry name" value="Znf_DNAligase_C4"/>
</dbReference>
<dbReference type="NCBIfam" id="TIGR00575">
    <property type="entry name" value="dnlj"/>
    <property type="match status" value="1"/>
</dbReference>
<dbReference type="NCBIfam" id="NF005932">
    <property type="entry name" value="PRK07956.1"/>
    <property type="match status" value="1"/>
</dbReference>
<dbReference type="PANTHER" id="PTHR23389">
    <property type="entry name" value="CHROMOSOME TRANSMISSION FIDELITY FACTOR 18"/>
    <property type="match status" value="1"/>
</dbReference>
<dbReference type="PANTHER" id="PTHR23389:SF9">
    <property type="entry name" value="DNA LIGASE"/>
    <property type="match status" value="1"/>
</dbReference>
<dbReference type="Pfam" id="PF00533">
    <property type="entry name" value="BRCT"/>
    <property type="match status" value="1"/>
</dbReference>
<dbReference type="Pfam" id="PF01653">
    <property type="entry name" value="DNA_ligase_aden"/>
    <property type="match status" value="1"/>
</dbReference>
<dbReference type="Pfam" id="PF03120">
    <property type="entry name" value="DNA_ligase_OB"/>
    <property type="match status" value="1"/>
</dbReference>
<dbReference type="Pfam" id="PF03119">
    <property type="entry name" value="DNA_ligase_ZBD"/>
    <property type="match status" value="1"/>
</dbReference>
<dbReference type="Pfam" id="PF12826">
    <property type="entry name" value="HHH_2"/>
    <property type="match status" value="1"/>
</dbReference>
<dbReference type="Pfam" id="PF22745">
    <property type="entry name" value="Nlig-Ia"/>
    <property type="match status" value="1"/>
</dbReference>
<dbReference type="PIRSF" id="PIRSF001604">
    <property type="entry name" value="LigA"/>
    <property type="match status" value="1"/>
</dbReference>
<dbReference type="SMART" id="SM00292">
    <property type="entry name" value="BRCT"/>
    <property type="match status" value="1"/>
</dbReference>
<dbReference type="SMART" id="SM00532">
    <property type="entry name" value="LIGANc"/>
    <property type="match status" value="1"/>
</dbReference>
<dbReference type="SUPFAM" id="SSF52113">
    <property type="entry name" value="BRCT domain"/>
    <property type="match status" value="1"/>
</dbReference>
<dbReference type="SUPFAM" id="SSF56091">
    <property type="entry name" value="DNA ligase/mRNA capping enzyme, catalytic domain"/>
    <property type="match status" value="1"/>
</dbReference>
<dbReference type="SUPFAM" id="SSF50249">
    <property type="entry name" value="Nucleic acid-binding proteins"/>
    <property type="match status" value="1"/>
</dbReference>
<dbReference type="SUPFAM" id="SSF47781">
    <property type="entry name" value="RuvA domain 2-like"/>
    <property type="match status" value="1"/>
</dbReference>
<dbReference type="PROSITE" id="PS50172">
    <property type="entry name" value="BRCT"/>
    <property type="match status" value="1"/>
</dbReference>
<dbReference type="PROSITE" id="PS01055">
    <property type="entry name" value="DNA_LIGASE_N1"/>
    <property type="match status" value="1"/>
</dbReference>
<dbReference type="PROSITE" id="PS01056">
    <property type="entry name" value="DNA_LIGASE_N2"/>
    <property type="match status" value="1"/>
</dbReference>
<reference key="1">
    <citation type="journal article" date="2008" name="PLoS ONE">
        <title>Genetic basis of virulence attenuation revealed by comparative genomic analysis of Mycobacterium tuberculosis strain H37Ra versus H37Rv.</title>
        <authorList>
            <person name="Zheng H."/>
            <person name="Lu L."/>
            <person name="Wang B."/>
            <person name="Pu S."/>
            <person name="Zhang X."/>
            <person name="Zhu G."/>
            <person name="Shi W."/>
            <person name="Zhang L."/>
            <person name="Wang H."/>
            <person name="Wang S."/>
            <person name="Zhao G."/>
            <person name="Zhang Y."/>
        </authorList>
    </citation>
    <scope>NUCLEOTIDE SEQUENCE [LARGE SCALE GENOMIC DNA]</scope>
    <source>
        <strain>ATCC 25177 / H37Ra</strain>
    </source>
</reference>
<proteinExistence type="inferred from homology"/>
<evidence type="ECO:0000255" key="1">
    <source>
        <dbReference type="HAMAP-Rule" id="MF_01588"/>
    </source>
</evidence>
<keyword id="KW-0227">DNA damage</keyword>
<keyword id="KW-0234">DNA repair</keyword>
<keyword id="KW-0235">DNA replication</keyword>
<keyword id="KW-0436">Ligase</keyword>
<keyword id="KW-0460">Magnesium</keyword>
<keyword id="KW-0464">Manganese</keyword>
<keyword id="KW-0479">Metal-binding</keyword>
<keyword id="KW-0520">NAD</keyword>
<keyword id="KW-1185">Reference proteome</keyword>
<keyword id="KW-0862">Zinc</keyword>
<feature type="chain" id="PRO_0000313316" description="DNA ligase">
    <location>
        <begin position="1"/>
        <end position="691"/>
    </location>
</feature>
<feature type="domain" description="BRCT" evidence="1">
    <location>
        <begin position="607"/>
        <end position="691"/>
    </location>
</feature>
<feature type="active site" description="N6-AMP-lysine intermediate" evidence="1">
    <location>
        <position position="123"/>
    </location>
</feature>
<feature type="binding site" evidence="1">
    <location>
        <begin position="41"/>
        <end position="45"/>
    </location>
    <ligand>
        <name>NAD(+)</name>
        <dbReference type="ChEBI" id="CHEBI:57540"/>
    </ligand>
</feature>
<feature type="binding site" evidence="1">
    <location>
        <begin position="91"/>
        <end position="92"/>
    </location>
    <ligand>
        <name>NAD(+)</name>
        <dbReference type="ChEBI" id="CHEBI:57540"/>
    </ligand>
</feature>
<feature type="binding site" evidence="1">
    <location>
        <position position="121"/>
    </location>
    <ligand>
        <name>NAD(+)</name>
        <dbReference type="ChEBI" id="CHEBI:57540"/>
    </ligand>
</feature>
<feature type="binding site" evidence="1">
    <location>
        <position position="144"/>
    </location>
    <ligand>
        <name>NAD(+)</name>
        <dbReference type="ChEBI" id="CHEBI:57540"/>
    </ligand>
</feature>
<feature type="binding site" evidence="1">
    <location>
        <position position="184"/>
    </location>
    <ligand>
        <name>NAD(+)</name>
        <dbReference type="ChEBI" id="CHEBI:57540"/>
    </ligand>
</feature>
<feature type="binding site" evidence="1">
    <location>
        <position position="300"/>
    </location>
    <ligand>
        <name>NAD(+)</name>
        <dbReference type="ChEBI" id="CHEBI:57540"/>
    </ligand>
</feature>
<feature type="binding site" evidence="1">
    <location>
        <position position="324"/>
    </location>
    <ligand>
        <name>NAD(+)</name>
        <dbReference type="ChEBI" id="CHEBI:57540"/>
    </ligand>
</feature>
<feature type="binding site" evidence="1">
    <location>
        <position position="418"/>
    </location>
    <ligand>
        <name>Zn(2+)</name>
        <dbReference type="ChEBI" id="CHEBI:29105"/>
    </ligand>
</feature>
<feature type="binding site" evidence="1">
    <location>
        <position position="421"/>
    </location>
    <ligand>
        <name>Zn(2+)</name>
        <dbReference type="ChEBI" id="CHEBI:29105"/>
    </ligand>
</feature>
<feature type="binding site" evidence="1">
    <location>
        <position position="437"/>
    </location>
    <ligand>
        <name>Zn(2+)</name>
        <dbReference type="ChEBI" id="CHEBI:29105"/>
    </ligand>
</feature>
<feature type="binding site" evidence="1">
    <location>
        <position position="443"/>
    </location>
    <ligand>
        <name>Zn(2+)</name>
        <dbReference type="ChEBI" id="CHEBI:29105"/>
    </ligand>
</feature>
<sequence>MSSPDADQTAPEVLRQWQALAEEVREHQFRYYVRDAPIISDAEFDELLRRLEALEEQHPELRTPDSPTQLVGGAGFATDFEPVDHLERMLSLDNAFTADELAAWAGRIHAEVGDAAHYLCELKIDGVALSLVYREGRLTRASTRGDGRTGEDVTLNARTIADVPERLTPGDDYPVPEVLEVRGEVFFRLDDFQALNASLVEEGKAPFANPRNSAAGSLRQKDPAVTARRRLRMICHGLGHVEGFRPATLHQAYLALRAWGLPVSEHTTLATDLAGVRERIDYWGEHRHEVDHEIDGVVVKVDEVALQRRLGSTSRAPRWAIAYKYPPEEAQTKLLDIRVNVGRTGRITPFAFMTPVKVAGSTVGQATLHNASEIKRKGVLIGDTVVIRKAGDVIPEVLGPVVELRDGSEREFIMPTTCPECGSPLAPEKEGDADIRCPNARGCPGQLRERVFHVASRNGLDIEVLGYEAGVALLQAKVIADEGELFALTERDLLRTDLFRTKAGELSANGKRLLVNLDKAKAAPLWRVLVALSIRHVGPTAARALATEFGSLDAIAAASTDQLAAVEGVGPTIAAAVTEWFAVDWHREIVDKWRAAGVRMVDERDESVPRTLAGLTIVVTGSLTGFSRDDAKEAIVARGGKAAGSVSKKTNYVVAGDSPGSKYDKAVELGVPILDEDGFRRLLADGPASRT</sequence>
<organism>
    <name type="scientific">Mycobacterium tuberculosis (strain ATCC 25177 / H37Ra)</name>
    <dbReference type="NCBI Taxonomy" id="419947"/>
    <lineage>
        <taxon>Bacteria</taxon>
        <taxon>Bacillati</taxon>
        <taxon>Actinomycetota</taxon>
        <taxon>Actinomycetes</taxon>
        <taxon>Mycobacteriales</taxon>
        <taxon>Mycobacteriaceae</taxon>
        <taxon>Mycobacterium</taxon>
        <taxon>Mycobacterium tuberculosis complex</taxon>
    </lineage>
</organism>
<gene>
    <name evidence="1" type="primary">ligA</name>
    <name type="ordered locus">MRA_3044</name>
</gene>
<protein>
    <recommendedName>
        <fullName evidence="1">DNA ligase</fullName>
        <ecNumber evidence="1">6.5.1.2</ecNumber>
    </recommendedName>
    <alternativeName>
        <fullName evidence="1">Polydeoxyribonucleotide synthase [NAD(+)]</fullName>
    </alternativeName>
</protein>